<protein>
    <recommendedName>
        <fullName evidence="20">Light-harvesting complex stress-related protein 3.1, chloroplastic</fullName>
    </recommendedName>
    <alternativeName>
        <fullName evidence="22">Chlorophyll a-b binding protein LHCSR3.1</fullName>
    </alternativeName>
</protein>
<dbReference type="EMBL" id="DS496136">
    <property type="protein sequence ID" value="EDP01013.1"/>
    <property type="molecule type" value="Genomic_DNA"/>
</dbReference>
<dbReference type="EMBL" id="CM008969">
    <property type="protein sequence ID" value="PNW79807.1"/>
    <property type="molecule type" value="Genomic_DNA"/>
</dbReference>
<dbReference type="RefSeq" id="XP_001696064.1">
    <property type="nucleotide sequence ID" value="XM_001696012.1"/>
</dbReference>
<dbReference type="RefSeq" id="XP_001696138.1">
    <property type="nucleotide sequence ID" value="XM_001696086.1"/>
</dbReference>
<dbReference type="STRING" id="3055.P0DO19"/>
<dbReference type="PaxDb" id="3055-EDP01013"/>
<dbReference type="EnsemblPlants" id="PNW79806">
    <property type="protein sequence ID" value="PNW79806"/>
    <property type="gene ID" value="CHLRE_08g367400v5"/>
</dbReference>
<dbReference type="EnsemblPlants" id="PNW79807">
    <property type="protein sequence ID" value="PNW79807"/>
    <property type="gene ID" value="CHLRE_08g367500v5"/>
</dbReference>
<dbReference type="GeneID" id="5721689"/>
<dbReference type="Gramene" id="PNW79806">
    <property type="protein sequence ID" value="PNW79806"/>
    <property type="gene ID" value="CHLRE_08g367400v5"/>
</dbReference>
<dbReference type="Gramene" id="PNW79807">
    <property type="protein sequence ID" value="PNW79807"/>
    <property type="gene ID" value="CHLRE_08g367500v5"/>
</dbReference>
<dbReference type="KEGG" id="cre:CHLRE_08g367500v5"/>
<dbReference type="InParanoid" id="P0DO19"/>
<dbReference type="OMA" id="FTIRENY"/>
<dbReference type="OrthoDB" id="423598at2759"/>
<dbReference type="Proteomes" id="UP000006906">
    <property type="component" value="Chromosome 8"/>
</dbReference>
<dbReference type="GO" id="GO:0009535">
    <property type="term" value="C:chloroplast thylakoid membrane"/>
    <property type="evidence" value="ECO:0007669"/>
    <property type="project" value="UniProtKB-SubCell"/>
</dbReference>
<dbReference type="GO" id="GO:0009522">
    <property type="term" value="C:photosystem I"/>
    <property type="evidence" value="ECO:0007669"/>
    <property type="project" value="UniProtKB-KW"/>
</dbReference>
<dbReference type="GO" id="GO:0009523">
    <property type="term" value="C:photosystem II"/>
    <property type="evidence" value="ECO:0007669"/>
    <property type="project" value="UniProtKB-KW"/>
</dbReference>
<dbReference type="GO" id="GO:0016168">
    <property type="term" value="F:chlorophyll binding"/>
    <property type="evidence" value="ECO:0007669"/>
    <property type="project" value="UniProtKB-KW"/>
</dbReference>
<dbReference type="GO" id="GO:0046872">
    <property type="term" value="F:metal ion binding"/>
    <property type="evidence" value="ECO:0007669"/>
    <property type="project" value="UniProtKB-KW"/>
</dbReference>
<dbReference type="GO" id="GO:0010196">
    <property type="term" value="P:nonphotochemical quenching"/>
    <property type="evidence" value="ECO:0000315"/>
    <property type="project" value="UniProtKB"/>
</dbReference>
<dbReference type="GO" id="GO:0009768">
    <property type="term" value="P:photosynthesis, light harvesting in photosystem I"/>
    <property type="evidence" value="ECO:0000318"/>
    <property type="project" value="GO_Central"/>
</dbReference>
<dbReference type="GO" id="GO:0009644">
    <property type="term" value="P:response to high light intensity"/>
    <property type="evidence" value="ECO:0000315"/>
    <property type="project" value="UniProtKB"/>
</dbReference>
<dbReference type="GO" id="GO:0009416">
    <property type="term" value="P:response to light stimulus"/>
    <property type="evidence" value="ECO:0000318"/>
    <property type="project" value="GO_Central"/>
</dbReference>
<dbReference type="GO" id="GO:0080183">
    <property type="term" value="P:response to photooxidative stress"/>
    <property type="evidence" value="ECO:0000315"/>
    <property type="project" value="UniProtKB"/>
</dbReference>
<dbReference type="FunFam" id="1.10.3460.10:FF:000012">
    <property type="entry name" value="Fucoxanthin chlorophyll a/c protein, LI818 clade"/>
    <property type="match status" value="1"/>
</dbReference>
<dbReference type="Gene3D" id="1.10.3460.10">
    <property type="entry name" value="Chlorophyll a/b binding protein domain"/>
    <property type="match status" value="1"/>
</dbReference>
<dbReference type="InterPro" id="IPR001344">
    <property type="entry name" value="Chloro_AB-bd_pln"/>
</dbReference>
<dbReference type="InterPro" id="IPR022796">
    <property type="entry name" value="Chloroa_b-bind"/>
</dbReference>
<dbReference type="PANTHER" id="PTHR21649">
    <property type="entry name" value="CHLOROPHYLL A/B BINDING PROTEIN"/>
    <property type="match status" value="1"/>
</dbReference>
<dbReference type="Pfam" id="PF00504">
    <property type="entry name" value="Chloroa_b-bind"/>
    <property type="match status" value="1"/>
</dbReference>
<dbReference type="SUPFAM" id="SSF103511">
    <property type="entry name" value="Chlorophyll a-b binding protein"/>
    <property type="match status" value="1"/>
</dbReference>
<gene>
    <name evidence="20" type="primary">LHCSR3.1</name>
    <name evidence="19" type="synonym">LHCSR2</name>
    <name evidence="21" type="synonym">LHCSR3</name>
    <name evidence="24" type="ORF">CHLRE_08g367500v5</name>
    <name evidence="23" type="ORF">CHLREDRAFT_184731</name>
</gene>
<organism>
    <name type="scientific">Chlamydomonas reinhardtii</name>
    <name type="common">Chlamydomonas smithii</name>
    <dbReference type="NCBI Taxonomy" id="3055"/>
    <lineage>
        <taxon>Eukaryota</taxon>
        <taxon>Viridiplantae</taxon>
        <taxon>Chlorophyta</taxon>
        <taxon>core chlorophytes</taxon>
        <taxon>Chlorophyceae</taxon>
        <taxon>CS clade</taxon>
        <taxon>Chlamydomonadales</taxon>
        <taxon>Chlamydomonadaceae</taxon>
        <taxon>Chlamydomonas</taxon>
    </lineage>
</organism>
<proteinExistence type="evidence at protein level"/>
<feature type="transit peptide" description="Chloroplast" evidence="2">
    <location>
        <begin position="1"/>
        <end position="45"/>
    </location>
</feature>
<feature type="chain" id="PRO_0000447654" description="Light-harvesting complex stress-related protein 3.1, chloroplastic">
    <location>
        <begin position="46"/>
        <end position="259"/>
    </location>
</feature>
<feature type="transmembrane region" description="Helical" evidence="2">
    <location>
        <begin position="93"/>
        <end position="113"/>
    </location>
</feature>
<feature type="transmembrane region" description="Helical" evidence="2">
    <location>
        <begin position="137"/>
        <end position="157"/>
    </location>
</feature>
<feature type="transmembrane region" description="Helical" evidence="2">
    <location>
        <begin position="203"/>
        <end position="223"/>
    </location>
</feature>
<feature type="binding site" description="axial binding residue" evidence="1">
    <location>
        <position position="51"/>
    </location>
    <ligand>
        <name>chlorophyll b</name>
        <dbReference type="ChEBI" id="CHEBI:61721"/>
        <label>1</label>
    </ligand>
    <ligandPart>
        <name>Mg</name>
        <dbReference type="ChEBI" id="CHEBI:25107"/>
    </ligandPart>
</feature>
<feature type="binding site" evidence="1">
    <location>
        <position position="66"/>
    </location>
    <ligand>
        <name>chlorophyll a</name>
        <dbReference type="ChEBI" id="CHEBI:58416"/>
        <label>1</label>
    </ligand>
</feature>
<feature type="binding site" description="axial binding residue" evidence="1">
    <location>
        <position position="87"/>
    </location>
    <ligand>
        <name>chlorophyll a</name>
        <dbReference type="ChEBI" id="CHEBI:58416"/>
        <label>1</label>
    </ligand>
    <ligandPart>
        <name>Mg</name>
        <dbReference type="ChEBI" id="CHEBI:25107"/>
    </ligandPart>
</feature>
<feature type="binding site" description="axial binding residue" evidence="1">
    <location>
        <position position="90"/>
    </location>
    <ligand>
        <name>chlorophyll a</name>
        <dbReference type="ChEBI" id="CHEBI:58416"/>
        <label>2</label>
    </ligand>
    <ligandPart>
        <name>Mg</name>
        <dbReference type="ChEBI" id="CHEBI:25107"/>
    </ligandPart>
</feature>
<feature type="binding site" evidence="1">
    <location>
        <position position="92"/>
    </location>
    <ligand>
        <name>chlorophyll b</name>
        <dbReference type="ChEBI" id="CHEBI:61721"/>
        <label>2</label>
    </ligand>
</feature>
<feature type="binding site" evidence="1">
    <location>
        <position position="130"/>
    </location>
    <ligand>
        <name>chlorophyll a</name>
        <dbReference type="ChEBI" id="CHEBI:58416"/>
        <label>3</label>
    </ligand>
</feature>
<feature type="binding site" description="axial binding residue" evidence="1">
    <location>
        <position position="147"/>
    </location>
    <ligand>
        <name>chlorophyll b</name>
        <dbReference type="ChEBI" id="CHEBI:61721"/>
        <label>3</label>
    </ligand>
    <ligandPart>
        <name>Mg</name>
        <dbReference type="ChEBI" id="CHEBI:25107"/>
    </ligandPart>
</feature>
<feature type="binding site" evidence="1">
    <location>
        <position position="150"/>
    </location>
    <ligand>
        <name>chlorophyll b</name>
        <dbReference type="ChEBI" id="CHEBI:61721"/>
        <label>4</label>
    </ligand>
</feature>
<feature type="binding site" evidence="1">
    <location>
        <position position="196"/>
    </location>
    <ligand>
        <name>chlorophyll a</name>
        <dbReference type="ChEBI" id="CHEBI:58416"/>
        <label>5</label>
    </ligand>
</feature>
<feature type="binding site" description="axial binding residue" evidence="1">
    <location>
        <position position="197"/>
    </location>
    <ligand>
        <name>chlorophyll a</name>
        <dbReference type="ChEBI" id="CHEBI:58416"/>
        <label>3</label>
    </ligand>
    <ligandPart>
        <name>Mg</name>
        <dbReference type="ChEBI" id="CHEBI:25107"/>
    </ligandPart>
</feature>
<feature type="binding site" description="axial binding residue" evidence="1">
    <location>
        <position position="200"/>
    </location>
    <ligand>
        <name>chlorophyll a</name>
        <dbReference type="ChEBI" id="CHEBI:58416"/>
        <label>4</label>
    </ligand>
    <ligandPart>
        <name>Mg</name>
        <dbReference type="ChEBI" id="CHEBI:25107"/>
    </ligandPart>
</feature>
<feature type="binding site" evidence="1">
    <location>
        <position position="202"/>
    </location>
    <ligand>
        <name>chlorophyll a</name>
        <dbReference type="ChEBI" id="CHEBI:58416"/>
        <label>1</label>
    </ligand>
</feature>
<feature type="binding site" description="axial binding residue" evidence="1">
    <location>
        <position position="214"/>
    </location>
    <ligand>
        <name>chlorophyll a</name>
        <dbReference type="ChEBI" id="CHEBI:58416"/>
        <label>5</label>
    </ligand>
    <ligandPart>
        <name>Mg</name>
        <dbReference type="ChEBI" id="CHEBI:25107"/>
    </ligandPart>
</feature>
<feature type="mutagenesis site" description="Impaired in non-photochemical quenching (NPQ) under high light conditions; when associated with Q-221 and Q-224." evidence="9">
    <original>D</original>
    <variation>N</variation>
    <location>
        <position position="117"/>
    </location>
</feature>
<feature type="mutagenesis site" description="Impaired in non-photochemical quenching (NPQ) under high light conditions; when associated with N-117 and Q-224." evidence="9">
    <original>E</original>
    <variation>Q</variation>
    <location>
        <position position="221"/>
    </location>
</feature>
<feature type="mutagenesis site" description="Impaired in non-photochemical quenching (NPQ) under high light conditions; when associated with N-117 and Q-221." evidence="9">
    <original>E</original>
    <variation>Q</variation>
    <location>
        <position position="224"/>
    </location>
</feature>
<comment type="function">
    <text evidence="4 5 6 9 10 12 13 14 17 18">Required for non-photochemical quenching (NPQ), a mechanism that converts and dissipates the harmful excess absorbed light energy into heat and protect the photosynthetic apparatus from photo-oxidative damage (PubMed:19940928, PubMed:21267060, PubMed:23716695, PubMed:26817847, PubMed:27626383, PubMed:27693674, PubMed:28233792, PubMed:30782831, PubMed:31042040). NPQ includes dissipating excess light energy to heat (qE) and the reversible coupling of LHCII to photosystems (state transitions or qT), which are considered separate NPQ mechanisms (PubMed:28233792). Is responsible for most of the excess light energy to heat dissipation (qE), also known as energy-dependent chlorophyll fluorescence quenching activity of chlorophyll excited states (PubMed:21267060, PubMed:28233792). Involved in a de-coupling and re-coupling of energy transfer to photosystem II (PSII) during qT (PubMed:28233792). Binds chlorophyll a and b (PubMed:21267060, PubMed:27150505). Is able to sense luminal acidification of the thylakoid membranes, which occurs along with elevated electron flow caused by excess light (PubMed:21267060, PubMed:26817847, PubMed:31042040). Establishes interactions with photosystem II (PSII) antenna components upon lumen acidification, and protonation of lumen-exposed, negatively charged residues both in LHCSR3 and in PSII antenna components (PubMed:26817847). Mediates excitation energy transfer from light-harvesting complex II (LHCII) to photosystem I (PSI), rather than photosystem II (PSII), at low pH, which mimics the acidified lumen of the thylakoid membranes in high light-exposed chloroplasts (PubMed:30782831). Activates PSI-dependent fluorescence quenching in addition to dissipating excitation energy in LHCII to avoid photooxidative stress under excess light (PubMed:30782831). Contributes with PGRL1 to the regulation of electron flow upstream of photosystem I (PSI), and limits the accumulation of electrons on the PSI acceptor side, thus avoiding PSI photoinhibition (PubMed:27693674).</text>
</comment>
<comment type="subunit">
    <text evidence="8 15 16">Interacts with the photosystem II-light-harvesting complex II (PSII-LHCII) supercomplex to form PSII-LHCII-LHCSR3 supercomplex.</text>
</comment>
<comment type="subcellular location">
    <subcellularLocation>
        <location evidence="22">Plastid</location>
        <location evidence="22">Chloroplast thylakoid membrane</location>
        <topology evidence="2">Multi-pass membrane protein</topology>
    </subcellularLocation>
</comment>
<comment type="induction">
    <text evidence="3 4 5 7 11 13">Induced by sulfur deprivation (PubMed:15470261). Induced by high light stress (at protein level) (PubMed:19940928, PubMed:21267060, PubMed:24850838, PubMed:27358399, PubMed:27693674).</text>
</comment>
<comment type="disruption phenotype">
    <text evidence="4 12 13 14">Impaired in non-photochemical quenching (NPQ) under high light conditions.</text>
</comment>
<comment type="similarity">
    <text evidence="22">Belongs to the light-harvesting chlorophyll a/b-binding (LHC) protein family.</text>
</comment>
<name>LHR31_CHLRE</name>
<keyword id="KW-0148">Chlorophyll</keyword>
<keyword id="KW-0150">Chloroplast</keyword>
<keyword id="KW-0157">Chromophore</keyword>
<keyword id="KW-0460">Magnesium</keyword>
<keyword id="KW-0472">Membrane</keyword>
<keyword id="KW-0479">Metal-binding</keyword>
<keyword id="KW-0602">Photosynthesis</keyword>
<keyword id="KW-0603">Photosystem I</keyword>
<keyword id="KW-0604">Photosystem II</keyword>
<keyword id="KW-0934">Plastid</keyword>
<keyword id="KW-1185">Reference proteome</keyword>
<keyword id="KW-0346">Stress response</keyword>
<keyword id="KW-0793">Thylakoid</keyword>
<keyword id="KW-0809">Transit peptide</keyword>
<keyword id="KW-0812">Transmembrane</keyword>
<keyword id="KW-1133">Transmembrane helix</keyword>
<sequence>MLANVVSRKASGLRQTPARATVAVKSVSGRRTTAAEPQTAAPVAAEDVFAYTKNLPGVTAPFEGVFDPAGFLATASIKDVRRWRESEITHGRVAMLAALGFVVGEQLQDFPLFFNWDGRVSGPAIYHFQQIGQGFWEPLLIAIGVAESYRVAVGWATPTGTGFNSLKDDYEPGDLGFDPLGLKPTDPEELKVMQTKELNNGRLAMIAIAAFVAQELVEQTEIFEHLALRFEKEAILELDDIERDLGLPVTPLPDNLKSL</sequence>
<accession>P0DO19</accession>
<accession>A8J431</accession>
<evidence type="ECO:0000250" key="1">
    <source>
        <dbReference type="UniProtKB" id="P12333"/>
    </source>
</evidence>
<evidence type="ECO:0000255" key="2"/>
<evidence type="ECO:0000269" key="3">
    <source>
    </source>
</evidence>
<evidence type="ECO:0000269" key="4">
    <source>
    </source>
</evidence>
<evidence type="ECO:0000269" key="5">
    <source>
    </source>
</evidence>
<evidence type="ECO:0000269" key="6">
    <source>
    </source>
</evidence>
<evidence type="ECO:0000269" key="7">
    <source>
    </source>
</evidence>
<evidence type="ECO:0000269" key="8">
    <source>
    </source>
</evidence>
<evidence type="ECO:0000269" key="9">
    <source>
    </source>
</evidence>
<evidence type="ECO:0000269" key="10">
    <source>
    </source>
</evidence>
<evidence type="ECO:0000269" key="11">
    <source>
    </source>
</evidence>
<evidence type="ECO:0000269" key="12">
    <source>
    </source>
</evidence>
<evidence type="ECO:0000269" key="13">
    <source>
    </source>
</evidence>
<evidence type="ECO:0000269" key="14">
    <source>
    </source>
</evidence>
<evidence type="ECO:0000269" key="15">
    <source>
    </source>
</evidence>
<evidence type="ECO:0000269" key="16">
    <source>
    </source>
</evidence>
<evidence type="ECO:0000269" key="17">
    <source>
    </source>
</evidence>
<evidence type="ECO:0000269" key="18">
    <source>
    </source>
</evidence>
<evidence type="ECO:0000303" key="19">
    <source>
    </source>
</evidence>
<evidence type="ECO:0000303" key="20">
    <source>
    </source>
</evidence>
<evidence type="ECO:0000303" key="21">
    <source>
    </source>
</evidence>
<evidence type="ECO:0000305" key="22"/>
<evidence type="ECO:0000312" key="23">
    <source>
        <dbReference type="EMBL" id="EDP01013.1"/>
    </source>
</evidence>
<evidence type="ECO:0000312" key="24">
    <source>
        <dbReference type="EMBL" id="PNW79807.1"/>
    </source>
</evidence>
<reference key="1">
    <citation type="journal article" date="2007" name="Science">
        <title>The Chlamydomonas genome reveals the evolution of key animal and plant functions.</title>
        <authorList>
            <person name="Merchant S.S."/>
            <person name="Prochnik S.E."/>
            <person name="Vallon O."/>
            <person name="Harris E.H."/>
            <person name="Karpowicz S.J."/>
            <person name="Witman G.B."/>
            <person name="Terry A."/>
            <person name="Salamov A."/>
            <person name="Fritz-Laylin L.K."/>
            <person name="Marechal-Drouard L."/>
            <person name="Marshall W.F."/>
            <person name="Qu L.H."/>
            <person name="Nelson D.R."/>
            <person name="Sanderfoot A.A."/>
            <person name="Spalding M.H."/>
            <person name="Kapitonov V.V."/>
            <person name="Ren Q."/>
            <person name="Ferris P."/>
            <person name="Lindquist E."/>
            <person name="Shapiro H."/>
            <person name="Lucas S.M."/>
            <person name="Grimwood J."/>
            <person name="Schmutz J."/>
            <person name="Cardol P."/>
            <person name="Cerutti H."/>
            <person name="Chanfreau G."/>
            <person name="Chen C.L."/>
            <person name="Cognat V."/>
            <person name="Croft M.T."/>
            <person name="Dent R."/>
            <person name="Dutcher S."/>
            <person name="Fernandez E."/>
            <person name="Fukuzawa H."/>
            <person name="Gonzalez-Ballester D."/>
            <person name="Gonzalez-Halphen D."/>
            <person name="Hallmann A."/>
            <person name="Hanikenne M."/>
            <person name="Hippler M."/>
            <person name="Inwood W."/>
            <person name="Jabbari K."/>
            <person name="Kalanon M."/>
            <person name="Kuras R."/>
            <person name="Lefebvre P.A."/>
            <person name="Lemaire S.D."/>
            <person name="Lobanov A.V."/>
            <person name="Lohr M."/>
            <person name="Manuell A."/>
            <person name="Meier I."/>
            <person name="Mets L."/>
            <person name="Mittag M."/>
            <person name="Mittelmeier T."/>
            <person name="Moroney J.V."/>
            <person name="Moseley J."/>
            <person name="Napoli C."/>
            <person name="Nedelcu A.M."/>
            <person name="Niyogi K."/>
            <person name="Novoselov S.V."/>
            <person name="Paulsen I.T."/>
            <person name="Pazour G.J."/>
            <person name="Purton S."/>
            <person name="Ral J.P."/>
            <person name="Riano-Pachon D.M."/>
            <person name="Riekhof W."/>
            <person name="Rymarquis L."/>
            <person name="Schroda M."/>
            <person name="Stern D."/>
            <person name="Umen J."/>
            <person name="Willows R."/>
            <person name="Wilson N."/>
            <person name="Zimmer S.L."/>
            <person name="Allmer J."/>
            <person name="Balk J."/>
            <person name="Bisova K."/>
            <person name="Chen C.J."/>
            <person name="Elias M."/>
            <person name="Gendler K."/>
            <person name="Hauser C."/>
            <person name="Lamb M.R."/>
            <person name="Ledford H."/>
            <person name="Long J.C."/>
            <person name="Minagawa J."/>
            <person name="Page M.D."/>
            <person name="Pan J."/>
            <person name="Pootakham W."/>
            <person name="Roje S."/>
            <person name="Rose A."/>
            <person name="Stahlberg E."/>
            <person name="Terauchi A.M."/>
            <person name="Yang P."/>
            <person name="Ball S."/>
            <person name="Bowler C."/>
            <person name="Dieckmann C.L."/>
            <person name="Gladyshev V.N."/>
            <person name="Green P."/>
            <person name="Jorgensen R."/>
            <person name="Mayfield S."/>
            <person name="Mueller-Roeber B."/>
            <person name="Rajamani S."/>
            <person name="Sayre R.T."/>
            <person name="Brokstein P."/>
            <person name="Dubchak I."/>
            <person name="Goodstein D."/>
            <person name="Hornick L."/>
            <person name="Huang Y.W."/>
            <person name="Jhaveri J."/>
            <person name="Luo Y."/>
            <person name="Martinez D."/>
            <person name="Ngau W.C."/>
            <person name="Otillar B."/>
            <person name="Poliakov A."/>
            <person name="Porter A."/>
            <person name="Szajkowski L."/>
            <person name="Werner G."/>
            <person name="Zhou K."/>
            <person name="Grigoriev I.V."/>
            <person name="Rokhsar D.S."/>
            <person name="Grossman A.R."/>
        </authorList>
    </citation>
    <scope>NUCLEOTIDE SEQUENCE [LARGE SCALE GENOMIC DNA]</scope>
    <source>
        <strain>CC-503</strain>
    </source>
</reference>
<reference key="2">
    <citation type="submission" date="2017-07" db="EMBL/GenBank/DDBJ databases">
        <title>WGS assembly of Chlamydomonas reinhardtii.</title>
        <authorList>
            <consortium name="Chlamydomonas Annotation Team"/>
            <consortium name="JGI Annotation Team"/>
            <person name="Merchant S.S."/>
            <person name="Prochnik S.E."/>
            <person name="Vallon O."/>
            <person name="Harris E.H."/>
            <person name="Karpowicz S.J."/>
            <person name="Witman G.B."/>
            <person name="Terry A."/>
            <person name="Salamov A."/>
            <person name="Fritz-Laylin L.K."/>
            <person name="Marechal-Drouard L."/>
            <person name="Marshall W.F."/>
            <person name="Qu L.H."/>
            <person name="Nelson D.R."/>
            <person name="Sanderfoot A.A."/>
            <person name="Spalding M.H."/>
            <person name="Kapitonov V.V."/>
            <person name="Ren Q."/>
            <person name="Ferris P."/>
            <person name="Lindquist E."/>
            <person name="Shapiro H."/>
            <person name="Lucas S.M."/>
            <person name="Grimwood J."/>
            <person name="Schmutz J."/>
            <person name="Grigoriev I.V."/>
            <person name="Rokhsar D.S."/>
        </authorList>
    </citation>
    <scope>GENOME REANNOTATION</scope>
    <source>
        <strain>CC-503</strain>
    </source>
</reference>
<reference key="3">
    <citation type="journal article" date="2004" name="Eukaryot. Cell">
        <title>Insights into the survival of Chlamydomonas reinhardtii during sulfur starvation based on microarray analysis of gene expression.</title>
        <authorList>
            <person name="Zhang Z."/>
            <person name="Shrager J."/>
            <person name="Jain M."/>
            <person name="Chang C.W."/>
            <person name="Vallon O."/>
            <person name="Grossman A.R."/>
        </authorList>
    </citation>
    <scope>INDUCTION BY SULFUR DEPRIVATION</scope>
</reference>
<reference key="4">
    <citation type="journal article" date="2009" name="Nature">
        <title>An ancient light-harvesting protein is critical for the regulation of algal photosynthesis.</title>
        <authorList>
            <person name="Peers G."/>
            <person name="Truong T.B."/>
            <person name="Ostendorf E."/>
            <person name="Busch A."/>
            <person name="Elrad D."/>
            <person name="Grossman A.R."/>
            <person name="Hippler M."/>
            <person name="Niyogi K.K."/>
        </authorList>
    </citation>
    <scope>FUNCTION</scope>
    <scope>INDUCTION BY HIGH LIGHT</scope>
    <scope>DISRUPTION PHENOTYPE</scope>
</reference>
<reference key="5">
    <citation type="journal article" date="2011" name="PLoS Biol.">
        <title>Analysis of LhcSR3, a protein essential for feedback de-excitation in the green alga Chlamydomonas reinhardtii.</title>
        <authorList>
            <person name="Bonente G."/>
            <person name="Ballottari M."/>
            <person name="Truong T.B."/>
            <person name="Morosinotto T."/>
            <person name="Ahn T.K."/>
            <person name="Fleming G.R."/>
            <person name="Niyogi K.K."/>
            <person name="Bassi R."/>
        </authorList>
    </citation>
    <scope>FUNCTION</scope>
    <scope>INDUCTION BY HIGH LIGHT</scope>
</reference>
<reference key="6">
    <citation type="journal article" date="2013" name="Proc. Natl. Acad. Sci. U.S.A.">
        <title>Energy-dissipative supercomplex of photosystem II associated with LHCSR3 in Chlamydomonas reinhardtii.</title>
        <authorList>
            <person name="Tokutsu R."/>
            <person name="Minagawa J."/>
        </authorList>
    </citation>
    <scope>FUNCTION</scope>
</reference>
<reference key="7">
    <citation type="journal article" date="2014" name="Plant Cell Physiol.">
        <title>Transcriptional regulation of the stress-responsive light harvesting complex genes in Chlamydomonas reinhardtii.</title>
        <authorList>
            <person name="Maruyama S."/>
            <person name="Tokutsu R."/>
            <person name="Minagawa J."/>
        </authorList>
    </citation>
    <scope>INDUCTION BY HIGH LIGHT</scope>
</reference>
<reference key="8">
    <citation type="journal article" date="2015" name="Plant Physiol.">
        <title>PHOTOSYSTEM II SUBUNIT R is required for efficient binding of LIGHT-HARVESTING COMPLEX STRESS-RELATED PROTEIN3 to photosystem II-light-harvesting supercomplexes in Chlamydomonas reinhardtii.</title>
        <authorList>
            <person name="Xue H."/>
            <person name="Tokutsu R."/>
            <person name="Bergner S.V."/>
            <person name="Scholz M."/>
            <person name="Minagawa J."/>
            <person name="Hippler M."/>
        </authorList>
    </citation>
    <scope>INTERACTION WITH PSII-LHCII SUPERCOMPLEX</scope>
</reference>
<reference key="9">
    <citation type="journal article" date="2016" name="Biochim. Biophys. Acta">
        <title>Excitation dynamics and structural implication of the stress-related complex LHCSR3 from the green alga Chlamydomonas reinhardtii.</title>
        <authorList>
            <person name="Liguori N."/>
            <person name="Novoderezhkin V."/>
            <person name="Roy L.M."/>
            <person name="van Grondelle R."/>
            <person name="Croce R."/>
        </authorList>
    </citation>
    <scope>FUNCTION</scope>
</reference>
<reference key="10">
    <citation type="journal article" date="2016" name="J. Biol. Chem.">
        <title>Identification of pH-sensing sites in the light harvesting complex stress-related 3 protein essential for triggering non-photochemical quenching in Chlamydomonas reinhardtii.</title>
        <authorList>
            <person name="Ballottari M."/>
            <person name="Truong T.B."/>
            <person name="De Re E."/>
            <person name="Erickson E."/>
            <person name="Stella G.R."/>
            <person name="Fleming G.R."/>
            <person name="Bassi R."/>
            <person name="Niyogi K.K."/>
        </authorList>
    </citation>
    <scope>FUNCTION</scope>
    <scope>MUTAGENESIS OF ASP-117; GLU-221 AND GLU-224</scope>
</reference>
<reference key="11">
    <citation type="journal article" date="2016" name="J. Biol. Chem.">
        <title>Photosystem II subunit PsbS is involved in the induction of LHCSR protein-dependent energy dissipation in Chlamydomonas reinhardtii.</title>
        <authorList>
            <person name="Correa-Galvis V."/>
            <person name="Redekop P."/>
            <person name="Guan K."/>
            <person name="Griess A."/>
            <person name="Truong T.B."/>
            <person name="Wakao S."/>
            <person name="Niyogi K.K."/>
            <person name="Jahns P."/>
        </authorList>
    </citation>
    <scope>INDUCTION BY HIGH LIGHT</scope>
</reference>
<reference key="12">
    <citation type="journal article" date="2016" name="Nature">
        <title>A blue-light photoreceptor mediates the feedback regulation of photosynthesis.</title>
        <authorList>
            <person name="Petroutsos D."/>
            <person name="Tokutsu R."/>
            <person name="Maruyama S."/>
            <person name="Flori S."/>
            <person name="Greiner A."/>
            <person name="Magneschi L."/>
            <person name="Cusant L."/>
            <person name="Kottke T."/>
            <person name="Mittag M."/>
            <person name="Hegemann P."/>
            <person name="Finazzi G."/>
            <person name="Minagawa J."/>
        </authorList>
    </citation>
    <scope>FUNCTION</scope>
    <scope>DISRUPTION PHENOTYPE</scope>
</reference>
<reference key="13">
    <citation type="journal article" date="2017" name="Biochim. Biophys. Acta">
        <title>Interaction between the photoprotective protein LHCSR3 and C2S2 photosystem II supercomplex in Chlamydomonas reinhardtii.</title>
        <authorList>
            <person name="Semchonok D.A."/>
            <person name="Sathish Yadav K.N."/>
            <person name="Xu P."/>
            <person name="Drop B."/>
            <person name="Croce R."/>
            <person name="Boekema E.J."/>
        </authorList>
    </citation>
    <scope>INTERACTION WITH PSII-LHCII SUPERCOMPLEX</scope>
</reference>
<reference key="14">
    <citation type="journal article" date="2017" name="J. Biol. Chem.">
        <title>Fluorescence lifetime analyses reveal how the high light-responsive protein LHCSR3 transforms PSII light-harvesting complexes into an energy-dissipative state.</title>
        <authorList>
            <person name="Kim E."/>
            <person name="Akimoto S."/>
            <person name="Tokutsu R."/>
            <person name="Yokono M."/>
            <person name="Minagawa J."/>
        </authorList>
    </citation>
    <scope>INTERACTION WITH PSII-LHCII SUPERCOMPLEX</scope>
</reference>
<reference key="15">
    <citation type="journal article" date="2017" name="Mol. Plant">
        <title>PGRL1 and LHCSR3 compensate for each other in controlling photosynthesis and avoiding photosystem I photoinhibition during high light acclimation of Chlamydomonas cells.</title>
        <authorList>
            <person name="Chaux F."/>
            <person name="Johnson X."/>
            <person name="Auroy P."/>
            <person name="Beyly-Adriano A."/>
            <person name="Te I."/>
            <person name="Cuine S."/>
            <person name="Peltier G."/>
        </authorList>
    </citation>
    <scope>FUNCTION</scope>
    <scope>INDUCTION BY HIGH LIGHT</scope>
    <scope>DISRUPTION PHENOTYPE</scope>
</reference>
<reference key="16">
    <citation type="journal article" date="2017" name="Sci. Rep.">
        <title>LHCSR3 affects de-coupling and re-coupling of LHCII to PSII during state transitions in Chlamydomonas reinhardtii.</title>
        <authorList>
            <person name="Roach T."/>
            <person name="Na C.S."/>
        </authorList>
    </citation>
    <scope>FUNCTION</scope>
    <scope>DISRUPTION PHENOTYPE</scope>
</reference>
<reference key="17">
    <citation type="journal article" date="2019" name="J. Phys. Chem. Lett.">
        <title>Molecular mechanisms of nonphotochemical quenching in the LHCSR3 protein of Chlamydomonas reinhardtii.</title>
        <authorList>
            <person name="de la Cruz Valbuena G."/>
            <person name="Camargo F.V."/>
            <person name="Borrego-Varillas R."/>
            <person name="Perozeni F."/>
            <person name="D'Andrea C."/>
            <person name="Ballottari M."/>
            <person name="Cerullo G."/>
        </authorList>
    </citation>
    <scope>FUNCTION</scope>
</reference>
<reference key="18">
    <citation type="journal article" date="2019" name="Proc. Natl. Acad. Sci. U.S.A.">
        <title>LHCSR3 is a nonphotochemical quencher of both photosystems in Chlamydomonas reinhardtii.</title>
        <authorList>
            <person name="Girolomoni L."/>
            <person name="Cazzaniga S."/>
            <person name="Pinnola A."/>
            <person name="Perozeni F."/>
            <person name="Ballottari M."/>
            <person name="Bassi R."/>
        </authorList>
    </citation>
    <scope>FUNCTION</scope>
</reference>